<sequence length="602" mass="68186">MSSMRTHYCGLVTEQLIGQEVALTGWVQRRRDHGGVIFIDLRDREGLVQVVCDPDRPEMFKAAEEIRNEFCIRITGKVRPRPAGTENANLTSGKIEVLCHELTVLNPSVTPPFQLDDDNLSETTRLTHRVLDLRRPQMQYNLRLRYKVAMEVRKYLDAQGFIDIETPMLGKSTPEGARDYLVPSRVNPGHFFALPQSPQIFKQMLMVSGFDRYYQITKCFRDEDLRADRQPEFTQIDCETSFLTEQEIRDLFEDMMRTVFKNAIDVDLDAKFPVMEFREAMARFGSDKPDLRVKLEFTELTEVMKDVDFKVFSGPANSDNGRVVGLRVPGGGAISRGEIDAYTQFVAIYGAKGLAWIKVNEVAKGRDGLQSPIVKNLHDAAIAEILKRTGAQDGDIIFFGADKAKIVNDAIGALRLKVGHSEFGKSTGLFEDTWKPLWVIDFPMFEYDEEDARWVAMHHPFTSPKDEHLQYLETDPGKCIAKAYDMVLNGWEMGGGSVRIYREDVQSKVFRALKINDEEARAKFGYLLDALQYGAPPHGGLAFGLDRIVTMMAGADSIRDVIAFPKTQRAQDLLTQAPSTVDEKQLRELHIRLRAQEPKTTA</sequence>
<gene>
    <name evidence="1" type="primary">aspS</name>
    <name type="ordered locus">Rmet_0378</name>
</gene>
<keyword id="KW-0030">Aminoacyl-tRNA synthetase</keyword>
<keyword id="KW-0067">ATP-binding</keyword>
<keyword id="KW-0963">Cytoplasm</keyword>
<keyword id="KW-0436">Ligase</keyword>
<keyword id="KW-0547">Nucleotide-binding</keyword>
<keyword id="KW-0648">Protein biosynthesis</keyword>
<keyword id="KW-1185">Reference proteome</keyword>
<accession>Q1LRG2</accession>
<proteinExistence type="inferred from homology"/>
<reference key="1">
    <citation type="journal article" date="2010" name="PLoS ONE">
        <title>The complete genome sequence of Cupriavidus metallidurans strain CH34, a master survivalist in harsh and anthropogenic environments.</title>
        <authorList>
            <person name="Janssen P.J."/>
            <person name="Van Houdt R."/>
            <person name="Moors H."/>
            <person name="Monsieurs P."/>
            <person name="Morin N."/>
            <person name="Michaux A."/>
            <person name="Benotmane M.A."/>
            <person name="Leys N."/>
            <person name="Vallaeys T."/>
            <person name="Lapidus A."/>
            <person name="Monchy S."/>
            <person name="Medigue C."/>
            <person name="Taghavi S."/>
            <person name="McCorkle S."/>
            <person name="Dunn J."/>
            <person name="van der Lelie D."/>
            <person name="Mergeay M."/>
        </authorList>
    </citation>
    <scope>NUCLEOTIDE SEQUENCE [LARGE SCALE GENOMIC DNA]</scope>
    <source>
        <strain>ATCC 43123 / DSM 2839 / NBRC 102507 / CH34</strain>
    </source>
</reference>
<organism>
    <name type="scientific">Cupriavidus metallidurans (strain ATCC 43123 / DSM 2839 / NBRC 102507 / CH34)</name>
    <name type="common">Ralstonia metallidurans</name>
    <dbReference type="NCBI Taxonomy" id="266264"/>
    <lineage>
        <taxon>Bacteria</taxon>
        <taxon>Pseudomonadati</taxon>
        <taxon>Pseudomonadota</taxon>
        <taxon>Betaproteobacteria</taxon>
        <taxon>Burkholderiales</taxon>
        <taxon>Burkholderiaceae</taxon>
        <taxon>Cupriavidus</taxon>
    </lineage>
</organism>
<protein>
    <recommendedName>
        <fullName evidence="1">Aspartate--tRNA(Asp/Asn) ligase</fullName>
        <ecNumber evidence="1">6.1.1.23</ecNumber>
    </recommendedName>
    <alternativeName>
        <fullName evidence="1">Aspartyl-tRNA synthetase</fullName>
        <shortName evidence="1">AspRS</shortName>
    </alternativeName>
    <alternativeName>
        <fullName evidence="1">Non-discriminating aspartyl-tRNA synthetase</fullName>
        <shortName evidence="1">ND-AspRS</shortName>
    </alternativeName>
</protein>
<dbReference type="EC" id="6.1.1.23" evidence="1"/>
<dbReference type="EMBL" id="CP000352">
    <property type="protein sequence ID" value="ABF07264.1"/>
    <property type="molecule type" value="Genomic_DNA"/>
</dbReference>
<dbReference type="RefSeq" id="WP_011515256.1">
    <property type="nucleotide sequence ID" value="NC_007973.1"/>
</dbReference>
<dbReference type="SMR" id="Q1LRG2"/>
<dbReference type="STRING" id="266264.Rmet_0378"/>
<dbReference type="KEGG" id="rme:Rmet_0378"/>
<dbReference type="eggNOG" id="COG0173">
    <property type="taxonomic scope" value="Bacteria"/>
</dbReference>
<dbReference type="HOGENOM" id="CLU_014330_3_2_4"/>
<dbReference type="Proteomes" id="UP000002429">
    <property type="component" value="Chromosome"/>
</dbReference>
<dbReference type="GO" id="GO:0005737">
    <property type="term" value="C:cytoplasm"/>
    <property type="evidence" value="ECO:0007669"/>
    <property type="project" value="UniProtKB-SubCell"/>
</dbReference>
<dbReference type="GO" id="GO:0004815">
    <property type="term" value="F:aspartate-tRNA ligase activity"/>
    <property type="evidence" value="ECO:0007669"/>
    <property type="project" value="UniProtKB-UniRule"/>
</dbReference>
<dbReference type="GO" id="GO:0050560">
    <property type="term" value="F:aspartate-tRNA(Asn) ligase activity"/>
    <property type="evidence" value="ECO:0007669"/>
    <property type="project" value="UniProtKB-EC"/>
</dbReference>
<dbReference type="GO" id="GO:0005524">
    <property type="term" value="F:ATP binding"/>
    <property type="evidence" value="ECO:0007669"/>
    <property type="project" value="UniProtKB-UniRule"/>
</dbReference>
<dbReference type="GO" id="GO:0003676">
    <property type="term" value="F:nucleic acid binding"/>
    <property type="evidence" value="ECO:0007669"/>
    <property type="project" value="InterPro"/>
</dbReference>
<dbReference type="GO" id="GO:0006422">
    <property type="term" value="P:aspartyl-tRNA aminoacylation"/>
    <property type="evidence" value="ECO:0007669"/>
    <property type="project" value="UniProtKB-UniRule"/>
</dbReference>
<dbReference type="CDD" id="cd00777">
    <property type="entry name" value="AspRS_core"/>
    <property type="match status" value="1"/>
</dbReference>
<dbReference type="CDD" id="cd04317">
    <property type="entry name" value="EcAspRS_like_N"/>
    <property type="match status" value="1"/>
</dbReference>
<dbReference type="Gene3D" id="3.30.930.10">
    <property type="entry name" value="Bira Bifunctional Protein, Domain 2"/>
    <property type="match status" value="1"/>
</dbReference>
<dbReference type="Gene3D" id="3.30.1360.30">
    <property type="entry name" value="GAD-like domain"/>
    <property type="match status" value="1"/>
</dbReference>
<dbReference type="Gene3D" id="2.40.50.140">
    <property type="entry name" value="Nucleic acid-binding proteins"/>
    <property type="match status" value="1"/>
</dbReference>
<dbReference type="HAMAP" id="MF_00044">
    <property type="entry name" value="Asp_tRNA_synth_type1"/>
    <property type="match status" value="1"/>
</dbReference>
<dbReference type="InterPro" id="IPR004364">
    <property type="entry name" value="Aa-tRNA-synt_II"/>
</dbReference>
<dbReference type="InterPro" id="IPR006195">
    <property type="entry name" value="aa-tRNA-synth_II"/>
</dbReference>
<dbReference type="InterPro" id="IPR045864">
    <property type="entry name" value="aa-tRNA-synth_II/BPL/LPL"/>
</dbReference>
<dbReference type="InterPro" id="IPR004524">
    <property type="entry name" value="Asp-tRNA-ligase_1"/>
</dbReference>
<dbReference type="InterPro" id="IPR047089">
    <property type="entry name" value="Asp-tRNA-ligase_1_N"/>
</dbReference>
<dbReference type="InterPro" id="IPR002312">
    <property type="entry name" value="Asp/Asn-tRNA-synth_IIb"/>
</dbReference>
<dbReference type="InterPro" id="IPR047090">
    <property type="entry name" value="AspRS_core"/>
</dbReference>
<dbReference type="InterPro" id="IPR004115">
    <property type="entry name" value="GAD-like_sf"/>
</dbReference>
<dbReference type="InterPro" id="IPR029351">
    <property type="entry name" value="GAD_dom"/>
</dbReference>
<dbReference type="InterPro" id="IPR012340">
    <property type="entry name" value="NA-bd_OB-fold"/>
</dbReference>
<dbReference type="InterPro" id="IPR004365">
    <property type="entry name" value="NA-bd_OB_tRNA"/>
</dbReference>
<dbReference type="NCBIfam" id="TIGR00459">
    <property type="entry name" value="aspS_bact"/>
    <property type="match status" value="1"/>
</dbReference>
<dbReference type="NCBIfam" id="NF001750">
    <property type="entry name" value="PRK00476.1"/>
    <property type="match status" value="1"/>
</dbReference>
<dbReference type="PANTHER" id="PTHR22594:SF5">
    <property type="entry name" value="ASPARTATE--TRNA LIGASE, MITOCHONDRIAL"/>
    <property type="match status" value="1"/>
</dbReference>
<dbReference type="PANTHER" id="PTHR22594">
    <property type="entry name" value="ASPARTYL/LYSYL-TRNA SYNTHETASE"/>
    <property type="match status" value="1"/>
</dbReference>
<dbReference type="Pfam" id="PF02938">
    <property type="entry name" value="GAD"/>
    <property type="match status" value="1"/>
</dbReference>
<dbReference type="Pfam" id="PF00152">
    <property type="entry name" value="tRNA-synt_2"/>
    <property type="match status" value="1"/>
</dbReference>
<dbReference type="Pfam" id="PF01336">
    <property type="entry name" value="tRNA_anti-codon"/>
    <property type="match status" value="1"/>
</dbReference>
<dbReference type="PRINTS" id="PR01042">
    <property type="entry name" value="TRNASYNTHASP"/>
</dbReference>
<dbReference type="SUPFAM" id="SSF55681">
    <property type="entry name" value="Class II aaRS and biotin synthetases"/>
    <property type="match status" value="1"/>
</dbReference>
<dbReference type="SUPFAM" id="SSF55261">
    <property type="entry name" value="GAD domain-like"/>
    <property type="match status" value="1"/>
</dbReference>
<dbReference type="SUPFAM" id="SSF50249">
    <property type="entry name" value="Nucleic acid-binding proteins"/>
    <property type="match status" value="1"/>
</dbReference>
<dbReference type="PROSITE" id="PS50862">
    <property type="entry name" value="AA_TRNA_LIGASE_II"/>
    <property type="match status" value="1"/>
</dbReference>
<comment type="function">
    <text evidence="1">Aspartyl-tRNA synthetase with relaxed tRNA specificity since it is able to aspartylate not only its cognate tRNA(Asp) but also tRNA(Asn). Reaction proceeds in two steps: L-aspartate is first activated by ATP to form Asp-AMP and then transferred to the acceptor end of tRNA(Asp/Asn).</text>
</comment>
<comment type="catalytic activity">
    <reaction evidence="1">
        <text>tRNA(Asx) + L-aspartate + ATP = L-aspartyl-tRNA(Asx) + AMP + diphosphate</text>
        <dbReference type="Rhea" id="RHEA:18349"/>
        <dbReference type="Rhea" id="RHEA-COMP:9710"/>
        <dbReference type="Rhea" id="RHEA-COMP:9711"/>
        <dbReference type="ChEBI" id="CHEBI:29991"/>
        <dbReference type="ChEBI" id="CHEBI:30616"/>
        <dbReference type="ChEBI" id="CHEBI:33019"/>
        <dbReference type="ChEBI" id="CHEBI:78442"/>
        <dbReference type="ChEBI" id="CHEBI:78516"/>
        <dbReference type="ChEBI" id="CHEBI:456215"/>
        <dbReference type="EC" id="6.1.1.23"/>
    </reaction>
</comment>
<comment type="subunit">
    <text evidence="1">Homodimer.</text>
</comment>
<comment type="subcellular location">
    <subcellularLocation>
        <location evidence="1">Cytoplasm</location>
    </subcellularLocation>
</comment>
<comment type="similarity">
    <text evidence="1">Belongs to the class-II aminoacyl-tRNA synthetase family. Type 1 subfamily.</text>
</comment>
<evidence type="ECO:0000255" key="1">
    <source>
        <dbReference type="HAMAP-Rule" id="MF_00044"/>
    </source>
</evidence>
<name>SYDND_CUPMC</name>
<feature type="chain" id="PRO_1000006735" description="Aspartate--tRNA(Asp/Asn) ligase">
    <location>
        <begin position="1"/>
        <end position="602"/>
    </location>
</feature>
<feature type="region of interest" description="Aspartate" evidence="1">
    <location>
        <begin position="199"/>
        <end position="202"/>
    </location>
</feature>
<feature type="binding site" evidence="1">
    <location>
        <position position="175"/>
    </location>
    <ligand>
        <name>L-aspartate</name>
        <dbReference type="ChEBI" id="CHEBI:29991"/>
    </ligand>
</feature>
<feature type="binding site" evidence="1">
    <location>
        <begin position="221"/>
        <end position="223"/>
    </location>
    <ligand>
        <name>ATP</name>
        <dbReference type="ChEBI" id="CHEBI:30616"/>
    </ligand>
</feature>
<feature type="binding site" evidence="1">
    <location>
        <position position="221"/>
    </location>
    <ligand>
        <name>L-aspartate</name>
        <dbReference type="ChEBI" id="CHEBI:29991"/>
    </ligand>
</feature>
<feature type="binding site" evidence="1">
    <location>
        <position position="230"/>
    </location>
    <ligand>
        <name>ATP</name>
        <dbReference type="ChEBI" id="CHEBI:30616"/>
    </ligand>
</feature>
<feature type="binding site" evidence="1">
    <location>
        <position position="458"/>
    </location>
    <ligand>
        <name>L-aspartate</name>
        <dbReference type="ChEBI" id="CHEBI:29991"/>
    </ligand>
</feature>
<feature type="binding site" evidence="1">
    <location>
        <position position="492"/>
    </location>
    <ligand>
        <name>ATP</name>
        <dbReference type="ChEBI" id="CHEBI:30616"/>
    </ligand>
</feature>
<feature type="binding site" evidence="1">
    <location>
        <position position="499"/>
    </location>
    <ligand>
        <name>L-aspartate</name>
        <dbReference type="ChEBI" id="CHEBI:29991"/>
    </ligand>
</feature>
<feature type="binding site" evidence="1">
    <location>
        <begin position="544"/>
        <end position="547"/>
    </location>
    <ligand>
        <name>ATP</name>
        <dbReference type="ChEBI" id="CHEBI:30616"/>
    </ligand>
</feature>
<feature type="site" description="Important for tRNA non-discrimination" evidence="1">
    <location>
        <position position="33"/>
    </location>
</feature>
<feature type="site" description="Important for tRNA non-discrimination" evidence="1">
    <location>
        <position position="84"/>
    </location>
</feature>